<evidence type="ECO:0000250" key="1"/>
<evidence type="ECO:0000255" key="2"/>
<evidence type="ECO:0000255" key="3">
    <source>
        <dbReference type="PROSITE-ProRule" id="PRU10095"/>
    </source>
</evidence>
<evidence type="ECO:0000305" key="4"/>
<comment type="function">
    <text evidence="1">Secreted metalloproteinase probably acting as a virulence factor.</text>
</comment>
<comment type="cofactor">
    <cofactor evidence="1">
        <name>Zn(2+)</name>
        <dbReference type="ChEBI" id="CHEBI:29105"/>
    </cofactor>
    <text evidence="1">Binds 1 zinc ion per subunit.</text>
</comment>
<comment type="subcellular location">
    <subcellularLocation>
        <location evidence="1">Secreted</location>
    </subcellularLocation>
</comment>
<comment type="similarity">
    <text evidence="4">Belongs to the peptidase M36 family.</text>
</comment>
<proteinExistence type="inferred from homology"/>
<accession>Q6WIH6</accession>
<feature type="signal peptide" evidence="2">
    <location>
        <begin position="1"/>
        <end position="21"/>
    </location>
</feature>
<feature type="propeptide" id="PRO_0000380874" evidence="1">
    <location>
        <begin position="22"/>
        <end position="245"/>
    </location>
</feature>
<feature type="chain" id="PRO_0000380875" description="Extracellular metalloproteinase 5">
    <location>
        <begin position="246"/>
        <end position="633"/>
    </location>
</feature>
<feature type="active site" evidence="3">
    <location>
        <position position="429"/>
    </location>
</feature>
<feature type="binding site" evidence="3">
    <location>
        <position position="428"/>
    </location>
    <ligand>
        <name>Zn(2+)</name>
        <dbReference type="ChEBI" id="CHEBI:29105"/>
        <note>catalytic</note>
    </ligand>
</feature>
<feature type="binding site" evidence="3">
    <location>
        <position position="432"/>
    </location>
    <ligand>
        <name>Zn(2+)</name>
        <dbReference type="ChEBI" id="CHEBI:29105"/>
        <note>catalytic</note>
    </ligand>
</feature>
<feature type="glycosylation site" description="N-linked (GlcNAc...) asparagine" evidence="2">
    <location>
        <position position="286"/>
    </location>
</feature>
<feature type="glycosylation site" description="N-linked (GlcNAc...) asparagine" evidence="2">
    <location>
        <position position="592"/>
    </location>
</feature>
<feature type="glycosylation site" description="N-linked (GlcNAc...) asparagine" evidence="2">
    <location>
        <position position="621"/>
    </location>
</feature>
<dbReference type="EC" id="3.4.24.-"/>
<dbReference type="EMBL" id="AY283571">
    <property type="protein sequence ID" value="AAQ21096.1"/>
    <property type="molecule type" value="Genomic_DNA"/>
</dbReference>
<dbReference type="SMR" id="Q6WIH6"/>
<dbReference type="MEROPS" id="M36.001"/>
<dbReference type="GlyCosmos" id="Q6WIH6">
    <property type="glycosylation" value="3 sites, No reported glycans"/>
</dbReference>
<dbReference type="PHI-base" id="PHI:4974"/>
<dbReference type="GO" id="GO:0005576">
    <property type="term" value="C:extracellular region"/>
    <property type="evidence" value="ECO:0007669"/>
    <property type="project" value="UniProtKB-SubCell"/>
</dbReference>
<dbReference type="GO" id="GO:0004222">
    <property type="term" value="F:metalloendopeptidase activity"/>
    <property type="evidence" value="ECO:0007669"/>
    <property type="project" value="InterPro"/>
</dbReference>
<dbReference type="GO" id="GO:0008270">
    <property type="term" value="F:zinc ion binding"/>
    <property type="evidence" value="ECO:0007669"/>
    <property type="project" value="InterPro"/>
</dbReference>
<dbReference type="GO" id="GO:0006508">
    <property type="term" value="P:proteolysis"/>
    <property type="evidence" value="ECO:0007669"/>
    <property type="project" value="UniProtKB-KW"/>
</dbReference>
<dbReference type="CDD" id="cd09596">
    <property type="entry name" value="M36"/>
    <property type="match status" value="1"/>
</dbReference>
<dbReference type="Gene3D" id="3.10.170.10">
    <property type="match status" value="1"/>
</dbReference>
<dbReference type="Gene3D" id="1.10.390.10">
    <property type="entry name" value="Neutral Protease Domain 2"/>
    <property type="match status" value="1"/>
</dbReference>
<dbReference type="InterPro" id="IPR011096">
    <property type="entry name" value="FTP_domain"/>
</dbReference>
<dbReference type="InterPro" id="IPR050371">
    <property type="entry name" value="Fungal_virulence_M36"/>
</dbReference>
<dbReference type="InterPro" id="IPR001842">
    <property type="entry name" value="Peptidase_M36"/>
</dbReference>
<dbReference type="InterPro" id="IPR027268">
    <property type="entry name" value="Peptidase_M4/M1_CTD_sf"/>
</dbReference>
<dbReference type="PANTHER" id="PTHR33478">
    <property type="entry name" value="EXTRACELLULAR METALLOPROTEINASE MEP"/>
    <property type="match status" value="1"/>
</dbReference>
<dbReference type="PANTHER" id="PTHR33478:SF1">
    <property type="entry name" value="EXTRACELLULAR METALLOPROTEINASE MEP"/>
    <property type="match status" value="1"/>
</dbReference>
<dbReference type="Pfam" id="PF07504">
    <property type="entry name" value="FTP"/>
    <property type="match status" value="1"/>
</dbReference>
<dbReference type="Pfam" id="PF02128">
    <property type="entry name" value="Peptidase_M36"/>
    <property type="match status" value="1"/>
</dbReference>
<dbReference type="PRINTS" id="PR00999">
    <property type="entry name" value="FUNGALYSIN"/>
</dbReference>
<dbReference type="SUPFAM" id="SSF55486">
    <property type="entry name" value="Metalloproteases ('zincins'), catalytic domain"/>
    <property type="match status" value="1"/>
</dbReference>
<dbReference type="PROSITE" id="PS00142">
    <property type="entry name" value="ZINC_PROTEASE"/>
    <property type="match status" value="1"/>
</dbReference>
<reference key="1">
    <citation type="journal article" date="2004" name="Microbiology">
        <title>Multiplication of an ancestral gene encoding secreted fungalysin preceded species differentiation in the dermatophytes Trichophyton and Microsporum.</title>
        <authorList>
            <person name="Jousson O."/>
            <person name="Lechenne B."/>
            <person name="Bontems O."/>
            <person name="Capoccia S."/>
            <person name="Mignon B."/>
            <person name="Barblan J."/>
            <person name="Quadroni M."/>
            <person name="Monod M."/>
        </authorList>
    </citation>
    <scope>NUCLEOTIDE SEQUENCE [GENOMIC DNA]</scope>
</reference>
<sequence length="633" mass="69829">MHGLLLAAAGLLSLPLHVIAHPQPSTNLAGRGVDLDAYRMADRSSYMNSDDMKLKQPGIASLSGGNYVDTATEVVKRMMPGMTFRMVDDHYVGESGISHVYFRQTMHGMDIDNSDFNVNIGKDGKVLSFGHSFYTGPAPDKAPVEKRDFSDPMKAFHGACKALSLPINADKATVQTMNEHEVMFMGTSGAMSDPQGKLCYMAKEDGTLALTWRVETDMGDNWLLSYVDAKETEKVHNVVDYVSHATYQVYRRALSPDPTEGKRESIENPWNLKTSPFTWISDGKTNYTTTRGNNAIAQANFDGGEDYLNNHRPNNKNLKFEYPYAPNMSPKSYIDASVTQLFYSANMVHDLYYMLGFTEKAGNFQVNNHGQGGKGNDFVILNAQDGSGTNNANFATPPDGKPGRMRVYIWTKAKPARDSSFEAGTVIHEYTHGLSNRLTGGPANAGCLNGMESGGMGEGWGDFFATAIRLKPNDNRNANYVHGEWVNNSPKGNRMYPYSTSLQTNPLVYTSCNKYNEVHAIGTVWGSMLYEVLWNLIDKHGKNDGPTPVFENGVPKDGKYLAMKLVMDGMAIQPCKPTFVQARDAIIDADMNLTKGSNRCEIWKAFAKRGLGVGAKYDPKNRTGNKGLPKDCQ</sequence>
<protein>
    <recommendedName>
        <fullName>Extracellular metalloproteinase 5</fullName>
        <ecNumber>3.4.24.-</ecNumber>
    </recommendedName>
    <alternativeName>
        <fullName>Fungalysin MEP5</fullName>
    </alternativeName>
</protein>
<gene>
    <name type="primary">MEP5</name>
</gene>
<organism>
    <name type="scientific">Arthroderma benhamiae</name>
    <name type="common">Trichophyton mentagrophytes</name>
    <dbReference type="NCBI Taxonomy" id="63400"/>
    <lineage>
        <taxon>Eukaryota</taxon>
        <taxon>Fungi</taxon>
        <taxon>Dikarya</taxon>
        <taxon>Ascomycota</taxon>
        <taxon>Pezizomycotina</taxon>
        <taxon>Eurotiomycetes</taxon>
        <taxon>Eurotiomycetidae</taxon>
        <taxon>Onygenales</taxon>
        <taxon>Arthrodermataceae</taxon>
        <taxon>Trichophyton</taxon>
    </lineage>
</organism>
<keyword id="KW-0325">Glycoprotein</keyword>
<keyword id="KW-0378">Hydrolase</keyword>
<keyword id="KW-0479">Metal-binding</keyword>
<keyword id="KW-0482">Metalloprotease</keyword>
<keyword id="KW-0645">Protease</keyword>
<keyword id="KW-0964">Secreted</keyword>
<keyword id="KW-0732">Signal</keyword>
<keyword id="KW-0843">Virulence</keyword>
<keyword id="KW-0862">Zinc</keyword>
<keyword id="KW-0865">Zymogen</keyword>
<name>MEP5_ARTBE</name>